<sequence>MSSPDRSIDIDLEKYPSTATKSVYGQSKDDKNVFDIHPTESEVIPGEVEYADTPSHQNFLQKFFSDFKPVKADREDGVALKRHLKGRHMQMIAIGGAIGTGLFVGSGSSLADGGPASVIIDYTLIGIMMFFTVYALGELAVSYPVAGGFYNYAVRFIDPAWGFAVGWNYFMNYFVTFPLELTTCAITFRYWTDINSCAWITIFLVFVICINLFGVRGYGEVEFILSTLKVVATTGFIILAIIINCGGVPTDPRGYIGGKIIKNKPFRHSFKGFCSVFTTAGFSFSGTEVVGLAAAEAEDPQKSLPRATKQVFWRIAIFYVVSLILIGLLVSPDDPRLMGNSSDGSTSPFVLAIKEANIRGLPSVFNAVIIISTVSVANSCTFTASRTLHAMAAKGDAPRFFAYTDRLGRPLLAMAVCLLFGFFAYINAAGDVSDTVFDWLLAISGISNFFSWGSINLCHIVFRLAMKKQGRSLDQLGFVSPMGIWGSAIGLAFNILCLMAEFYVSLFPIGSKPNANDFFQGYLAAPIVIAFFIGYKIYDRSHIPSLSKLDLDTGLRTYPPKDKESEKIRDAKGFFKWIWQSLC</sequence>
<feature type="chain" id="PRO_0000310828" description="Uncharacterized amino-acid permease P7G5.06">
    <location>
        <begin position="1"/>
        <end position="583"/>
    </location>
</feature>
<feature type="transmembrane region" description="Helical" evidence="2">
    <location>
        <begin position="91"/>
        <end position="111"/>
    </location>
</feature>
<feature type="transmembrane region" description="Helical" evidence="2">
    <location>
        <begin position="116"/>
        <end position="136"/>
    </location>
</feature>
<feature type="transmembrane region" description="Helical" evidence="2">
    <location>
        <begin position="159"/>
        <end position="179"/>
    </location>
</feature>
<feature type="transmembrane region" description="Helical" evidence="2">
    <location>
        <begin position="194"/>
        <end position="214"/>
    </location>
</feature>
<feature type="transmembrane region" description="Helical" evidence="2">
    <location>
        <begin position="223"/>
        <end position="243"/>
    </location>
</feature>
<feature type="transmembrane region" description="Helical" evidence="2">
    <location>
        <begin position="311"/>
        <end position="331"/>
    </location>
</feature>
<feature type="transmembrane region" description="Helical" evidence="2">
    <location>
        <begin position="364"/>
        <end position="384"/>
    </location>
</feature>
<feature type="transmembrane region" description="Helical" evidence="2">
    <location>
        <begin position="410"/>
        <end position="430"/>
    </location>
</feature>
<feature type="transmembrane region" description="Helical" evidence="2">
    <location>
        <begin position="435"/>
        <end position="455"/>
    </location>
</feature>
<feature type="transmembrane region" description="Helical" evidence="2">
    <location>
        <begin position="476"/>
        <end position="496"/>
    </location>
</feature>
<feature type="transmembrane region" description="Helical" evidence="2">
    <location>
        <begin position="518"/>
        <end position="538"/>
    </location>
</feature>
<feature type="modified residue" description="Phosphoserine" evidence="1">
    <location>
        <position position="22"/>
    </location>
</feature>
<feature type="glycosylation site" description="N-linked (GlcNAc...) asparagine" evidence="2">
    <location>
        <position position="340"/>
    </location>
</feature>
<keyword id="KW-0029">Amino-acid transport</keyword>
<keyword id="KW-0325">Glycoprotein</keyword>
<keyword id="KW-0333">Golgi apparatus</keyword>
<keyword id="KW-0472">Membrane</keyword>
<keyword id="KW-0597">Phosphoprotein</keyword>
<keyword id="KW-1185">Reference proteome</keyword>
<keyword id="KW-0812">Transmembrane</keyword>
<keyword id="KW-1133">Transmembrane helix</keyword>
<keyword id="KW-0813">Transport</keyword>
<reference evidence="5" key="1">
    <citation type="journal article" date="2002" name="Nature">
        <title>The genome sequence of Schizosaccharomyces pombe.</title>
        <authorList>
            <person name="Wood V."/>
            <person name="Gwilliam R."/>
            <person name="Rajandream M.A."/>
            <person name="Lyne M.H."/>
            <person name="Lyne R."/>
            <person name="Stewart A."/>
            <person name="Sgouros J.G."/>
            <person name="Peat N."/>
            <person name="Hayles J."/>
            <person name="Baker S.G."/>
            <person name="Basham D."/>
            <person name="Bowman S."/>
            <person name="Brooks K."/>
            <person name="Brown D."/>
            <person name="Brown S."/>
            <person name="Chillingworth T."/>
            <person name="Churcher C.M."/>
            <person name="Collins M."/>
            <person name="Connor R."/>
            <person name="Cronin A."/>
            <person name="Davis P."/>
            <person name="Feltwell T."/>
            <person name="Fraser A."/>
            <person name="Gentles S."/>
            <person name="Goble A."/>
            <person name="Hamlin N."/>
            <person name="Harris D.E."/>
            <person name="Hidalgo J."/>
            <person name="Hodgson G."/>
            <person name="Holroyd S."/>
            <person name="Hornsby T."/>
            <person name="Howarth S."/>
            <person name="Huckle E.J."/>
            <person name="Hunt S."/>
            <person name="Jagels K."/>
            <person name="James K.D."/>
            <person name="Jones L."/>
            <person name="Jones M."/>
            <person name="Leather S."/>
            <person name="McDonald S."/>
            <person name="McLean J."/>
            <person name="Mooney P."/>
            <person name="Moule S."/>
            <person name="Mungall K.L."/>
            <person name="Murphy L.D."/>
            <person name="Niblett D."/>
            <person name="Odell C."/>
            <person name="Oliver K."/>
            <person name="O'Neil S."/>
            <person name="Pearson D."/>
            <person name="Quail M.A."/>
            <person name="Rabbinowitsch E."/>
            <person name="Rutherford K.M."/>
            <person name="Rutter S."/>
            <person name="Saunders D."/>
            <person name="Seeger K."/>
            <person name="Sharp S."/>
            <person name="Skelton J."/>
            <person name="Simmonds M.N."/>
            <person name="Squares R."/>
            <person name="Squares S."/>
            <person name="Stevens K."/>
            <person name="Taylor K."/>
            <person name="Taylor R.G."/>
            <person name="Tivey A."/>
            <person name="Walsh S.V."/>
            <person name="Warren T."/>
            <person name="Whitehead S."/>
            <person name="Woodward J.R."/>
            <person name="Volckaert G."/>
            <person name="Aert R."/>
            <person name="Robben J."/>
            <person name="Grymonprez B."/>
            <person name="Weltjens I."/>
            <person name="Vanstreels E."/>
            <person name="Rieger M."/>
            <person name="Schaefer M."/>
            <person name="Mueller-Auer S."/>
            <person name="Gabel C."/>
            <person name="Fuchs M."/>
            <person name="Duesterhoeft A."/>
            <person name="Fritzc C."/>
            <person name="Holzer E."/>
            <person name="Moestl D."/>
            <person name="Hilbert H."/>
            <person name="Borzym K."/>
            <person name="Langer I."/>
            <person name="Beck A."/>
            <person name="Lehrach H."/>
            <person name="Reinhardt R."/>
            <person name="Pohl T.M."/>
            <person name="Eger P."/>
            <person name="Zimmermann W."/>
            <person name="Wedler H."/>
            <person name="Wambutt R."/>
            <person name="Purnelle B."/>
            <person name="Goffeau A."/>
            <person name="Cadieu E."/>
            <person name="Dreano S."/>
            <person name="Gloux S."/>
            <person name="Lelaure V."/>
            <person name="Mottier S."/>
            <person name="Galibert F."/>
            <person name="Aves S.J."/>
            <person name="Xiang Z."/>
            <person name="Hunt C."/>
            <person name="Moore K."/>
            <person name="Hurst S.M."/>
            <person name="Lucas M."/>
            <person name="Rochet M."/>
            <person name="Gaillardin C."/>
            <person name="Tallada V.A."/>
            <person name="Garzon A."/>
            <person name="Thode G."/>
            <person name="Daga R.R."/>
            <person name="Cruzado L."/>
            <person name="Jimenez J."/>
            <person name="Sanchez M."/>
            <person name="del Rey F."/>
            <person name="Benito J."/>
            <person name="Dominguez A."/>
            <person name="Revuelta J.L."/>
            <person name="Moreno S."/>
            <person name="Armstrong J."/>
            <person name="Forsburg S.L."/>
            <person name="Cerutti L."/>
            <person name="Lowe T."/>
            <person name="McCombie W.R."/>
            <person name="Paulsen I."/>
            <person name="Potashkin J."/>
            <person name="Shpakovski G.V."/>
            <person name="Ussery D."/>
            <person name="Barrell B.G."/>
            <person name="Nurse P."/>
        </authorList>
    </citation>
    <scope>NUCLEOTIDE SEQUENCE [LARGE SCALE GENOMIC DNA]</scope>
    <source>
        <strain>972 / ATCC 24843</strain>
    </source>
</reference>
<reference evidence="4" key="2">
    <citation type="journal article" date="2006" name="Nat. Biotechnol.">
        <title>ORFeome cloning and global analysis of protein localization in the fission yeast Schizosaccharomyces pombe.</title>
        <authorList>
            <person name="Matsuyama A."/>
            <person name="Arai R."/>
            <person name="Yashiroda Y."/>
            <person name="Shirai A."/>
            <person name="Kamata A."/>
            <person name="Sekido S."/>
            <person name="Kobayashi Y."/>
            <person name="Hashimoto A."/>
            <person name="Hamamoto M."/>
            <person name="Hiraoka Y."/>
            <person name="Horinouchi S."/>
            <person name="Yoshida M."/>
        </authorList>
    </citation>
    <scope>SUBCELLULAR LOCATION [LARGE SCALE ANALYSIS]</scope>
</reference>
<comment type="subcellular location">
    <subcellularLocation>
        <location evidence="4">Golgi apparatus membrane</location>
        <topology evidence="4">Multi-pass membrane protein</topology>
    </subcellularLocation>
    <subcellularLocation>
        <location evidence="4">Membrane</location>
        <topology evidence="4">Multi-pass membrane protein</topology>
    </subcellularLocation>
    <text evidence="3">Cell tip.</text>
</comment>
<comment type="similarity">
    <text evidence="2">Belongs to the amino acid-polyamine-organocation (APC) superfamily.</text>
</comment>
<organism>
    <name type="scientific">Schizosaccharomyces pombe (strain 972 / ATCC 24843)</name>
    <name type="common">Fission yeast</name>
    <dbReference type="NCBI Taxonomy" id="284812"/>
    <lineage>
        <taxon>Eukaryota</taxon>
        <taxon>Fungi</taxon>
        <taxon>Dikarya</taxon>
        <taxon>Ascomycota</taxon>
        <taxon>Taphrinomycotina</taxon>
        <taxon>Schizosaccharomycetes</taxon>
        <taxon>Schizosaccharomycetales</taxon>
        <taxon>Schizosaccharomycetaceae</taxon>
        <taxon>Schizosaccharomyces</taxon>
    </lineage>
</organism>
<proteinExistence type="inferred from homology"/>
<accession>Q9P768</accession>
<protein>
    <recommendedName>
        <fullName>Uncharacterized amino-acid permease P7G5.06</fullName>
    </recommendedName>
</protein>
<gene>
    <name type="ORF">SPAP7G5.06</name>
</gene>
<dbReference type="EMBL" id="CU329670">
    <property type="protein sequence ID" value="CAB88273.1"/>
    <property type="molecule type" value="Genomic_DNA"/>
</dbReference>
<dbReference type="SMR" id="Q9P768"/>
<dbReference type="BioGRID" id="278093">
    <property type="interactions" value="1"/>
</dbReference>
<dbReference type="FunCoup" id="Q9P768">
    <property type="interactions" value="307"/>
</dbReference>
<dbReference type="STRING" id="284812.Q9P768"/>
<dbReference type="iPTMnet" id="Q9P768"/>
<dbReference type="PaxDb" id="4896-SPAP7G5.06.1"/>
<dbReference type="EnsemblFungi" id="SPAP7G5.06.1">
    <property type="protein sequence ID" value="SPAP7G5.06.1:pep"/>
    <property type="gene ID" value="SPAP7G5.06"/>
</dbReference>
<dbReference type="KEGG" id="spo:2541596"/>
<dbReference type="PomBase" id="SPAP7G5.06"/>
<dbReference type="VEuPathDB" id="FungiDB:SPAP7G5.06"/>
<dbReference type="eggNOG" id="KOG1286">
    <property type="taxonomic scope" value="Eukaryota"/>
</dbReference>
<dbReference type="HOGENOM" id="CLU_007946_12_0_1"/>
<dbReference type="InParanoid" id="Q9P768"/>
<dbReference type="OMA" id="CLAHARM"/>
<dbReference type="PhylomeDB" id="Q9P768"/>
<dbReference type="PRO" id="PR:Q9P768"/>
<dbReference type="Proteomes" id="UP000002485">
    <property type="component" value="Chromosome I"/>
</dbReference>
<dbReference type="GO" id="GO:0051286">
    <property type="term" value="C:cell tip"/>
    <property type="evidence" value="ECO:0007005"/>
    <property type="project" value="PomBase"/>
</dbReference>
<dbReference type="GO" id="GO:0000139">
    <property type="term" value="C:Golgi membrane"/>
    <property type="evidence" value="ECO:0007669"/>
    <property type="project" value="UniProtKB-SubCell"/>
</dbReference>
<dbReference type="GO" id="GO:0016020">
    <property type="term" value="C:membrane"/>
    <property type="evidence" value="ECO:0000318"/>
    <property type="project" value="GO_Central"/>
</dbReference>
<dbReference type="GO" id="GO:0005886">
    <property type="term" value="C:plasma membrane"/>
    <property type="evidence" value="ECO:0000266"/>
    <property type="project" value="PomBase"/>
</dbReference>
<dbReference type="GO" id="GO:0015171">
    <property type="term" value="F:amino acid transmembrane transporter activity"/>
    <property type="evidence" value="ECO:0000318"/>
    <property type="project" value="GO_Central"/>
</dbReference>
<dbReference type="GO" id="GO:0015193">
    <property type="term" value="F:L-proline transmembrane transporter activity"/>
    <property type="evidence" value="ECO:0000305"/>
    <property type="project" value="PomBase"/>
</dbReference>
<dbReference type="GO" id="GO:0003333">
    <property type="term" value="P:amino acid transmembrane transport"/>
    <property type="evidence" value="ECO:0000318"/>
    <property type="project" value="GO_Central"/>
</dbReference>
<dbReference type="GO" id="GO:0019740">
    <property type="term" value="P:nitrogen utilization"/>
    <property type="evidence" value="ECO:0000315"/>
    <property type="project" value="PomBase"/>
</dbReference>
<dbReference type="GO" id="GO:1905647">
    <property type="term" value="P:proline import across plasma membrane"/>
    <property type="evidence" value="ECO:0000303"/>
    <property type="project" value="PomBase"/>
</dbReference>
<dbReference type="FunFam" id="1.20.1740.10:FF:000017">
    <property type="entry name" value="Amino acid permease"/>
    <property type="match status" value="1"/>
</dbReference>
<dbReference type="Gene3D" id="1.20.1740.10">
    <property type="entry name" value="Amino acid/polyamine transporter I"/>
    <property type="match status" value="1"/>
</dbReference>
<dbReference type="InterPro" id="IPR004841">
    <property type="entry name" value="AA-permease/SLC12A_dom"/>
</dbReference>
<dbReference type="InterPro" id="IPR004840">
    <property type="entry name" value="Amino_acid_permease_CS"/>
</dbReference>
<dbReference type="InterPro" id="IPR050524">
    <property type="entry name" value="APC_YAT"/>
</dbReference>
<dbReference type="PANTHER" id="PTHR43341">
    <property type="entry name" value="AMINO ACID PERMEASE"/>
    <property type="match status" value="1"/>
</dbReference>
<dbReference type="PANTHER" id="PTHR43341:SF1">
    <property type="entry name" value="GENERAL AMINO-ACID PERMEASE GAP1"/>
    <property type="match status" value="1"/>
</dbReference>
<dbReference type="Pfam" id="PF00324">
    <property type="entry name" value="AA_permease"/>
    <property type="match status" value="1"/>
</dbReference>
<dbReference type="PIRSF" id="PIRSF006060">
    <property type="entry name" value="AA_transporter"/>
    <property type="match status" value="1"/>
</dbReference>
<dbReference type="PROSITE" id="PS00218">
    <property type="entry name" value="AMINO_ACID_PERMEASE_1"/>
    <property type="match status" value="1"/>
</dbReference>
<evidence type="ECO:0000250" key="1">
    <source>
        <dbReference type="UniProtKB" id="P38085"/>
    </source>
</evidence>
<evidence type="ECO:0000255" key="2"/>
<evidence type="ECO:0000269" key="3">
    <source>
    </source>
</evidence>
<evidence type="ECO:0000305" key="4"/>
<evidence type="ECO:0000312" key="5">
    <source>
        <dbReference type="EMBL" id="CAB88273.1"/>
    </source>
</evidence>
<name>YI26_SCHPO</name>